<gene>
    <name evidence="1" type="primary">lexA</name>
    <name type="ordered locus">Adeh_1701</name>
</gene>
<organism>
    <name type="scientific">Anaeromyxobacter dehalogenans (strain 2CP-C)</name>
    <dbReference type="NCBI Taxonomy" id="290397"/>
    <lineage>
        <taxon>Bacteria</taxon>
        <taxon>Pseudomonadati</taxon>
        <taxon>Myxococcota</taxon>
        <taxon>Myxococcia</taxon>
        <taxon>Myxococcales</taxon>
        <taxon>Cystobacterineae</taxon>
        <taxon>Anaeromyxobacteraceae</taxon>
        <taxon>Anaeromyxobacter</taxon>
    </lineage>
</organism>
<sequence>MEGLTDRQLEVLRFIASQIEDHGYPPTIREIGEALDIRSTNGVNDHLKALERKGYLSRDPVKSRALIPTSAAREALGGGGEAGSNVVPLVRGPARPGSRMIEIPIVGRVAAGMPILAQERVEDTVQVDAFLLGTNKKVYGLRVQGDSMIGDGILPGDYVFVKKQLNADDGEIVVAMIDDEATVKRVYFEGDRVRFQPSNPRMAPIYVRHSDFRSTMILGVVVGVYRKLT</sequence>
<name>LEXA_ANADE</name>
<reference key="1">
    <citation type="submission" date="2006-01" db="EMBL/GenBank/DDBJ databases">
        <title>Complete sequence of Anaeromyxobacter dehalogenans 2CP-C.</title>
        <authorList>
            <person name="Copeland A."/>
            <person name="Lucas S."/>
            <person name="Lapidus A."/>
            <person name="Barry K."/>
            <person name="Detter J.C."/>
            <person name="Glavina T."/>
            <person name="Hammon N."/>
            <person name="Israni S."/>
            <person name="Pitluck S."/>
            <person name="Brettin T."/>
            <person name="Bruce D."/>
            <person name="Han C."/>
            <person name="Tapia R."/>
            <person name="Gilna P."/>
            <person name="Kiss H."/>
            <person name="Schmutz J."/>
            <person name="Larimer F."/>
            <person name="Land M."/>
            <person name="Kyrpides N."/>
            <person name="Anderson I."/>
            <person name="Sanford R.A."/>
            <person name="Ritalahti K.M."/>
            <person name="Thomas H.S."/>
            <person name="Kirby J.R."/>
            <person name="Zhulin I.B."/>
            <person name="Loeffler F.E."/>
            <person name="Richardson P."/>
        </authorList>
    </citation>
    <scope>NUCLEOTIDE SEQUENCE [LARGE SCALE GENOMIC DNA]</scope>
    <source>
        <strain>2CP-C</strain>
    </source>
</reference>
<accession>Q2IIJ0</accession>
<feature type="chain" id="PRO_1000001255" description="LexA repressor">
    <location>
        <begin position="1"/>
        <end position="229"/>
    </location>
</feature>
<feature type="DNA-binding region" description="H-T-H motif" evidence="1">
    <location>
        <begin position="28"/>
        <end position="48"/>
    </location>
</feature>
<feature type="active site" description="For autocatalytic cleavage activity" evidence="1">
    <location>
        <position position="147"/>
    </location>
</feature>
<feature type="active site" description="For autocatalytic cleavage activity" evidence="1">
    <location>
        <position position="184"/>
    </location>
</feature>
<feature type="site" description="Cleavage; by autolysis" evidence="1">
    <location>
        <begin position="111"/>
        <end position="112"/>
    </location>
</feature>
<keyword id="KW-0068">Autocatalytic cleavage</keyword>
<keyword id="KW-0227">DNA damage</keyword>
<keyword id="KW-0234">DNA repair</keyword>
<keyword id="KW-0235">DNA replication</keyword>
<keyword id="KW-0238">DNA-binding</keyword>
<keyword id="KW-0378">Hydrolase</keyword>
<keyword id="KW-1185">Reference proteome</keyword>
<keyword id="KW-0678">Repressor</keyword>
<keyword id="KW-0742">SOS response</keyword>
<keyword id="KW-0804">Transcription</keyword>
<keyword id="KW-0805">Transcription regulation</keyword>
<dbReference type="EC" id="3.4.21.88" evidence="1"/>
<dbReference type="EMBL" id="CP000251">
    <property type="protein sequence ID" value="ABC81474.1"/>
    <property type="molecule type" value="Genomic_DNA"/>
</dbReference>
<dbReference type="RefSeq" id="WP_011420757.1">
    <property type="nucleotide sequence ID" value="NC_007760.1"/>
</dbReference>
<dbReference type="SMR" id="Q2IIJ0"/>
<dbReference type="STRING" id="290397.Adeh_1701"/>
<dbReference type="MEROPS" id="S24.001"/>
<dbReference type="KEGG" id="ade:Adeh_1701"/>
<dbReference type="eggNOG" id="COG1974">
    <property type="taxonomic scope" value="Bacteria"/>
</dbReference>
<dbReference type="HOGENOM" id="CLU_066192_45_1_7"/>
<dbReference type="OrthoDB" id="9802364at2"/>
<dbReference type="Proteomes" id="UP000001935">
    <property type="component" value="Chromosome"/>
</dbReference>
<dbReference type="GO" id="GO:0003677">
    <property type="term" value="F:DNA binding"/>
    <property type="evidence" value="ECO:0007669"/>
    <property type="project" value="UniProtKB-UniRule"/>
</dbReference>
<dbReference type="GO" id="GO:0004252">
    <property type="term" value="F:serine-type endopeptidase activity"/>
    <property type="evidence" value="ECO:0007669"/>
    <property type="project" value="UniProtKB-UniRule"/>
</dbReference>
<dbReference type="GO" id="GO:0006281">
    <property type="term" value="P:DNA repair"/>
    <property type="evidence" value="ECO:0007669"/>
    <property type="project" value="UniProtKB-UniRule"/>
</dbReference>
<dbReference type="GO" id="GO:0006260">
    <property type="term" value="P:DNA replication"/>
    <property type="evidence" value="ECO:0007669"/>
    <property type="project" value="UniProtKB-UniRule"/>
</dbReference>
<dbReference type="GO" id="GO:0045892">
    <property type="term" value="P:negative regulation of DNA-templated transcription"/>
    <property type="evidence" value="ECO:0007669"/>
    <property type="project" value="UniProtKB-UniRule"/>
</dbReference>
<dbReference type="GO" id="GO:0006508">
    <property type="term" value="P:proteolysis"/>
    <property type="evidence" value="ECO:0007669"/>
    <property type="project" value="InterPro"/>
</dbReference>
<dbReference type="GO" id="GO:0009432">
    <property type="term" value="P:SOS response"/>
    <property type="evidence" value="ECO:0007669"/>
    <property type="project" value="UniProtKB-UniRule"/>
</dbReference>
<dbReference type="CDD" id="cd06529">
    <property type="entry name" value="S24_LexA-like"/>
    <property type="match status" value="1"/>
</dbReference>
<dbReference type="FunFam" id="1.10.10.10:FF:000009">
    <property type="entry name" value="LexA repressor"/>
    <property type="match status" value="1"/>
</dbReference>
<dbReference type="FunFam" id="2.10.109.10:FF:000001">
    <property type="entry name" value="LexA repressor"/>
    <property type="match status" value="1"/>
</dbReference>
<dbReference type="Gene3D" id="2.10.109.10">
    <property type="entry name" value="Umud Fragment, subunit A"/>
    <property type="match status" value="1"/>
</dbReference>
<dbReference type="Gene3D" id="1.10.10.10">
    <property type="entry name" value="Winged helix-like DNA-binding domain superfamily/Winged helix DNA-binding domain"/>
    <property type="match status" value="1"/>
</dbReference>
<dbReference type="HAMAP" id="MF_00015">
    <property type="entry name" value="LexA"/>
    <property type="match status" value="1"/>
</dbReference>
<dbReference type="InterPro" id="IPR006200">
    <property type="entry name" value="LexA"/>
</dbReference>
<dbReference type="InterPro" id="IPR039418">
    <property type="entry name" value="LexA-like"/>
</dbReference>
<dbReference type="InterPro" id="IPR036286">
    <property type="entry name" value="LexA/Signal_pep-like_sf"/>
</dbReference>
<dbReference type="InterPro" id="IPR006199">
    <property type="entry name" value="LexA_DNA-bd_dom"/>
</dbReference>
<dbReference type="InterPro" id="IPR050077">
    <property type="entry name" value="LexA_repressor"/>
</dbReference>
<dbReference type="InterPro" id="IPR006197">
    <property type="entry name" value="Peptidase_S24_LexA"/>
</dbReference>
<dbReference type="InterPro" id="IPR015927">
    <property type="entry name" value="Peptidase_S24_S26A/B/C"/>
</dbReference>
<dbReference type="InterPro" id="IPR036388">
    <property type="entry name" value="WH-like_DNA-bd_sf"/>
</dbReference>
<dbReference type="InterPro" id="IPR036390">
    <property type="entry name" value="WH_DNA-bd_sf"/>
</dbReference>
<dbReference type="NCBIfam" id="TIGR00498">
    <property type="entry name" value="lexA"/>
    <property type="match status" value="1"/>
</dbReference>
<dbReference type="PANTHER" id="PTHR33516">
    <property type="entry name" value="LEXA REPRESSOR"/>
    <property type="match status" value="1"/>
</dbReference>
<dbReference type="PANTHER" id="PTHR33516:SF2">
    <property type="entry name" value="LEXA REPRESSOR-RELATED"/>
    <property type="match status" value="1"/>
</dbReference>
<dbReference type="Pfam" id="PF01726">
    <property type="entry name" value="LexA_DNA_bind"/>
    <property type="match status" value="1"/>
</dbReference>
<dbReference type="Pfam" id="PF00717">
    <property type="entry name" value="Peptidase_S24"/>
    <property type="match status" value="1"/>
</dbReference>
<dbReference type="PRINTS" id="PR00726">
    <property type="entry name" value="LEXASERPTASE"/>
</dbReference>
<dbReference type="SUPFAM" id="SSF51306">
    <property type="entry name" value="LexA/Signal peptidase"/>
    <property type="match status" value="1"/>
</dbReference>
<dbReference type="SUPFAM" id="SSF46785">
    <property type="entry name" value="Winged helix' DNA-binding domain"/>
    <property type="match status" value="1"/>
</dbReference>
<proteinExistence type="inferred from homology"/>
<protein>
    <recommendedName>
        <fullName evidence="1">LexA repressor</fullName>
        <ecNumber evidence="1">3.4.21.88</ecNumber>
    </recommendedName>
</protein>
<comment type="function">
    <text evidence="1">Represses a number of genes involved in the response to DNA damage (SOS response), including recA and lexA. In the presence of single-stranded DNA, RecA interacts with LexA causing an autocatalytic cleavage which disrupts the DNA-binding part of LexA, leading to derepression of the SOS regulon and eventually DNA repair.</text>
</comment>
<comment type="catalytic activity">
    <reaction evidence="1">
        <text>Hydrolysis of Ala-|-Gly bond in repressor LexA.</text>
        <dbReference type="EC" id="3.4.21.88"/>
    </reaction>
</comment>
<comment type="subunit">
    <text evidence="1">Homodimer.</text>
</comment>
<comment type="similarity">
    <text evidence="1">Belongs to the peptidase S24 family.</text>
</comment>
<evidence type="ECO:0000255" key="1">
    <source>
        <dbReference type="HAMAP-Rule" id="MF_00015"/>
    </source>
</evidence>